<proteinExistence type="inferred from homology"/>
<feature type="chain" id="PRO_1000202590" description="Peptidyl-tRNA hydrolase">
    <location>
        <begin position="1"/>
        <end position="186"/>
    </location>
</feature>
<feature type="active site" description="Proton acceptor" evidence="1">
    <location>
        <position position="19"/>
    </location>
</feature>
<feature type="binding site" evidence="1">
    <location>
        <position position="14"/>
    </location>
    <ligand>
        <name>tRNA</name>
        <dbReference type="ChEBI" id="CHEBI:17843"/>
    </ligand>
</feature>
<feature type="binding site" evidence="1">
    <location>
        <position position="64"/>
    </location>
    <ligand>
        <name>tRNA</name>
        <dbReference type="ChEBI" id="CHEBI:17843"/>
    </ligand>
</feature>
<feature type="binding site" evidence="1">
    <location>
        <position position="66"/>
    </location>
    <ligand>
        <name>tRNA</name>
        <dbReference type="ChEBI" id="CHEBI:17843"/>
    </ligand>
</feature>
<feature type="binding site" evidence="1">
    <location>
        <position position="112"/>
    </location>
    <ligand>
        <name>tRNA</name>
        <dbReference type="ChEBI" id="CHEBI:17843"/>
    </ligand>
</feature>
<feature type="site" description="Discriminates between blocked and unblocked aminoacyl-tRNA" evidence="1">
    <location>
        <position position="9"/>
    </location>
</feature>
<feature type="site" description="Stabilizes the basic form of H active site to accept a proton" evidence="1">
    <location>
        <position position="91"/>
    </location>
</feature>
<organism>
    <name type="scientific">Listeria monocytogenes serotype 4b (strain CLIP80459)</name>
    <dbReference type="NCBI Taxonomy" id="568819"/>
    <lineage>
        <taxon>Bacteria</taxon>
        <taxon>Bacillati</taxon>
        <taxon>Bacillota</taxon>
        <taxon>Bacilli</taxon>
        <taxon>Bacillales</taxon>
        <taxon>Listeriaceae</taxon>
        <taxon>Listeria</taxon>
    </lineage>
</organism>
<name>PTH_LISMC</name>
<gene>
    <name evidence="1" type="primary">pth</name>
    <name type="ordered locus">Lm4b_00211</name>
</gene>
<accession>C1KYE6</accession>
<sequence>MKLIAGLGNPGKKYERTRHNVGFMVVDELSFRHQTPWKKSKFNGMTSEIIVGGEKMILVKPLTFMNASGECIRPLMDYYNIPIEDVVIVYDDLDLPVGKIRLRQKGSAGGHNGMKSIIQHVKTQEFNRIRVGVSRPLKGEVIHYVLGDFPKAEQPDIIAAIQKSADAIEDFAQTPFIEVMNKYNQK</sequence>
<dbReference type="EC" id="3.1.1.29" evidence="1"/>
<dbReference type="EMBL" id="FM242711">
    <property type="protein sequence ID" value="CAS04001.1"/>
    <property type="molecule type" value="Genomic_DNA"/>
</dbReference>
<dbReference type="RefSeq" id="WP_003725738.1">
    <property type="nucleotide sequence ID" value="NC_012488.1"/>
</dbReference>
<dbReference type="SMR" id="C1KYE6"/>
<dbReference type="KEGG" id="lmc:Lm4b_00211"/>
<dbReference type="HOGENOM" id="CLU_062456_4_1_9"/>
<dbReference type="GO" id="GO:0005737">
    <property type="term" value="C:cytoplasm"/>
    <property type="evidence" value="ECO:0007669"/>
    <property type="project" value="UniProtKB-SubCell"/>
</dbReference>
<dbReference type="GO" id="GO:0004045">
    <property type="term" value="F:peptidyl-tRNA hydrolase activity"/>
    <property type="evidence" value="ECO:0007669"/>
    <property type="project" value="UniProtKB-UniRule"/>
</dbReference>
<dbReference type="GO" id="GO:0000049">
    <property type="term" value="F:tRNA binding"/>
    <property type="evidence" value="ECO:0007669"/>
    <property type="project" value="UniProtKB-UniRule"/>
</dbReference>
<dbReference type="GO" id="GO:0006515">
    <property type="term" value="P:protein quality control for misfolded or incompletely synthesized proteins"/>
    <property type="evidence" value="ECO:0007669"/>
    <property type="project" value="UniProtKB-UniRule"/>
</dbReference>
<dbReference type="GO" id="GO:0072344">
    <property type="term" value="P:rescue of stalled ribosome"/>
    <property type="evidence" value="ECO:0007669"/>
    <property type="project" value="UniProtKB-UniRule"/>
</dbReference>
<dbReference type="CDD" id="cd00462">
    <property type="entry name" value="PTH"/>
    <property type="match status" value="1"/>
</dbReference>
<dbReference type="FunFam" id="3.40.50.1470:FF:000001">
    <property type="entry name" value="Peptidyl-tRNA hydrolase"/>
    <property type="match status" value="1"/>
</dbReference>
<dbReference type="Gene3D" id="3.40.50.1470">
    <property type="entry name" value="Peptidyl-tRNA hydrolase"/>
    <property type="match status" value="1"/>
</dbReference>
<dbReference type="HAMAP" id="MF_00083">
    <property type="entry name" value="Pept_tRNA_hydro_bact"/>
    <property type="match status" value="1"/>
</dbReference>
<dbReference type="InterPro" id="IPR001328">
    <property type="entry name" value="Pept_tRNA_hydro"/>
</dbReference>
<dbReference type="InterPro" id="IPR018171">
    <property type="entry name" value="Pept_tRNA_hydro_CS"/>
</dbReference>
<dbReference type="InterPro" id="IPR036416">
    <property type="entry name" value="Pept_tRNA_hydro_sf"/>
</dbReference>
<dbReference type="NCBIfam" id="TIGR00447">
    <property type="entry name" value="pth"/>
    <property type="match status" value="1"/>
</dbReference>
<dbReference type="PANTHER" id="PTHR17224">
    <property type="entry name" value="PEPTIDYL-TRNA HYDROLASE"/>
    <property type="match status" value="1"/>
</dbReference>
<dbReference type="PANTHER" id="PTHR17224:SF1">
    <property type="entry name" value="PEPTIDYL-TRNA HYDROLASE"/>
    <property type="match status" value="1"/>
</dbReference>
<dbReference type="Pfam" id="PF01195">
    <property type="entry name" value="Pept_tRNA_hydro"/>
    <property type="match status" value="1"/>
</dbReference>
<dbReference type="SUPFAM" id="SSF53178">
    <property type="entry name" value="Peptidyl-tRNA hydrolase-like"/>
    <property type="match status" value="1"/>
</dbReference>
<dbReference type="PROSITE" id="PS01195">
    <property type="entry name" value="PEPT_TRNA_HYDROL_1"/>
    <property type="match status" value="1"/>
</dbReference>
<dbReference type="PROSITE" id="PS01196">
    <property type="entry name" value="PEPT_TRNA_HYDROL_2"/>
    <property type="match status" value="1"/>
</dbReference>
<comment type="function">
    <text evidence="1">Hydrolyzes ribosome-free peptidyl-tRNAs (with 1 or more amino acids incorporated), which drop off the ribosome during protein synthesis, or as a result of ribosome stalling.</text>
</comment>
<comment type="function">
    <text evidence="1">Catalyzes the release of premature peptidyl moieties from peptidyl-tRNA molecules trapped in stalled 50S ribosomal subunits, and thus maintains levels of free tRNAs and 50S ribosomes.</text>
</comment>
<comment type="catalytic activity">
    <reaction evidence="1">
        <text>an N-acyl-L-alpha-aminoacyl-tRNA + H2O = an N-acyl-L-amino acid + a tRNA + H(+)</text>
        <dbReference type="Rhea" id="RHEA:54448"/>
        <dbReference type="Rhea" id="RHEA-COMP:10123"/>
        <dbReference type="Rhea" id="RHEA-COMP:13883"/>
        <dbReference type="ChEBI" id="CHEBI:15377"/>
        <dbReference type="ChEBI" id="CHEBI:15378"/>
        <dbReference type="ChEBI" id="CHEBI:59874"/>
        <dbReference type="ChEBI" id="CHEBI:78442"/>
        <dbReference type="ChEBI" id="CHEBI:138191"/>
        <dbReference type="EC" id="3.1.1.29"/>
    </reaction>
</comment>
<comment type="subunit">
    <text evidence="1">Monomer.</text>
</comment>
<comment type="subcellular location">
    <subcellularLocation>
        <location evidence="1">Cytoplasm</location>
    </subcellularLocation>
</comment>
<comment type="similarity">
    <text evidence="1">Belongs to the PTH family.</text>
</comment>
<keyword id="KW-0963">Cytoplasm</keyword>
<keyword id="KW-0378">Hydrolase</keyword>
<keyword id="KW-0694">RNA-binding</keyword>
<keyword id="KW-0820">tRNA-binding</keyword>
<protein>
    <recommendedName>
        <fullName evidence="1">Peptidyl-tRNA hydrolase</fullName>
        <shortName evidence="1">Pth</shortName>
        <ecNumber evidence="1">3.1.1.29</ecNumber>
    </recommendedName>
</protein>
<reference key="1">
    <citation type="journal article" date="2012" name="BMC Genomics">
        <title>Comparative genomics and transcriptomics of lineages I, II, and III strains of Listeria monocytogenes.</title>
        <authorList>
            <person name="Hain T."/>
            <person name="Ghai R."/>
            <person name="Billion A."/>
            <person name="Kuenne C.T."/>
            <person name="Steinweg C."/>
            <person name="Izar B."/>
            <person name="Mohamed W."/>
            <person name="Mraheil M."/>
            <person name="Domann E."/>
            <person name="Schaffrath S."/>
            <person name="Karst U."/>
            <person name="Goesmann A."/>
            <person name="Oehm S."/>
            <person name="Puhler A."/>
            <person name="Merkl R."/>
            <person name="Vorwerk S."/>
            <person name="Glaser P."/>
            <person name="Garrido P."/>
            <person name="Rusniok C."/>
            <person name="Buchrieser C."/>
            <person name="Goebel W."/>
            <person name="Chakraborty T."/>
        </authorList>
    </citation>
    <scope>NUCLEOTIDE SEQUENCE [LARGE SCALE GENOMIC DNA]</scope>
    <source>
        <strain>CLIP80459</strain>
    </source>
</reference>
<evidence type="ECO:0000255" key="1">
    <source>
        <dbReference type="HAMAP-Rule" id="MF_00083"/>
    </source>
</evidence>